<name>TLRN1_MOUSE</name>
<accession>Q9ERE8</accession>
<accession>Q542D0</accession>
<protein>
    <recommendedName>
        <fullName evidence="5">Talin rod domain-containing protein 1</fullName>
    </recommendedName>
    <alternativeName>
        <fullName evidence="6">Mesoderm development candidate 1</fullName>
    </alternativeName>
</protein>
<proteinExistence type="evidence at protein level"/>
<feature type="initiator methionine" description="Removed" evidence="7">
    <location>
        <position position="1"/>
    </location>
</feature>
<feature type="chain" id="PRO_0000096442" description="Talin rod domain-containing protein 1">
    <location>
        <begin position="2"/>
        <end position="362"/>
    </location>
</feature>
<feature type="region of interest" description="Disordered" evidence="2">
    <location>
        <begin position="1"/>
        <end position="27"/>
    </location>
</feature>
<feature type="compositionally biased region" description="Low complexity" evidence="2">
    <location>
        <begin position="9"/>
        <end position="27"/>
    </location>
</feature>
<feature type="modified residue" description="N-acetylalanine" evidence="7">
    <location>
        <position position="2"/>
    </location>
</feature>
<evidence type="ECO:0000250" key="1">
    <source>
        <dbReference type="UniProtKB" id="Q9H1K6"/>
    </source>
</evidence>
<evidence type="ECO:0000256" key="2">
    <source>
        <dbReference type="SAM" id="MobiDB-lite"/>
    </source>
</evidence>
<evidence type="ECO:0000269" key="3">
    <source>
    </source>
</evidence>
<evidence type="ECO:0000269" key="4">
    <source>
    </source>
</evidence>
<evidence type="ECO:0000305" key="5"/>
<evidence type="ECO:0000312" key="6">
    <source>
        <dbReference type="MGI" id="MGI:1891420"/>
    </source>
</evidence>
<evidence type="ECO:0007744" key="7">
    <source>
    </source>
</evidence>
<keyword id="KW-0007">Acetylation</keyword>
<keyword id="KW-1185">Reference proteome</keyword>
<organism>
    <name type="scientific">Mus musculus</name>
    <name type="common">Mouse</name>
    <dbReference type="NCBI Taxonomy" id="10090"/>
    <lineage>
        <taxon>Eukaryota</taxon>
        <taxon>Metazoa</taxon>
        <taxon>Chordata</taxon>
        <taxon>Craniata</taxon>
        <taxon>Vertebrata</taxon>
        <taxon>Euteleostomi</taxon>
        <taxon>Mammalia</taxon>
        <taxon>Eutheria</taxon>
        <taxon>Euarchontoglires</taxon>
        <taxon>Glires</taxon>
        <taxon>Rodentia</taxon>
        <taxon>Myomorpha</taxon>
        <taxon>Muroidea</taxon>
        <taxon>Muridae</taxon>
        <taxon>Murinae</taxon>
        <taxon>Mus</taxon>
        <taxon>Mus</taxon>
    </lineage>
</organism>
<reference key="1">
    <citation type="journal article" date="2001" name="Genomics">
        <title>Identification of mesoderm development (mesd) candidate genes by comparative mapping and genome sequence analysis.</title>
        <authorList>
            <person name="Wines M.E."/>
            <person name="Lee L."/>
            <person name="Katari M.S."/>
            <person name="Zhang L."/>
            <person name="DeRossi C."/>
            <person name="Shi Y."/>
            <person name="Perkins S."/>
            <person name="Feldman M."/>
            <person name="McCombie W.R."/>
            <person name="Holdener B.C."/>
        </authorList>
    </citation>
    <scope>NUCLEOTIDE SEQUENCE [GENOMIC DNA]</scope>
    <scope>TISSUE SPECIFICITY</scope>
    <source>
        <strain>129/SvJ</strain>
    </source>
</reference>
<reference key="2">
    <citation type="journal article" date="2005" name="Science">
        <title>The transcriptional landscape of the mammalian genome.</title>
        <authorList>
            <person name="Carninci P."/>
            <person name="Kasukawa T."/>
            <person name="Katayama S."/>
            <person name="Gough J."/>
            <person name="Frith M.C."/>
            <person name="Maeda N."/>
            <person name="Oyama R."/>
            <person name="Ravasi T."/>
            <person name="Lenhard B."/>
            <person name="Wells C."/>
            <person name="Kodzius R."/>
            <person name="Shimokawa K."/>
            <person name="Bajic V.B."/>
            <person name="Brenner S.E."/>
            <person name="Batalov S."/>
            <person name="Forrest A.R."/>
            <person name="Zavolan M."/>
            <person name="Davis M.J."/>
            <person name="Wilming L.G."/>
            <person name="Aidinis V."/>
            <person name="Allen J.E."/>
            <person name="Ambesi-Impiombato A."/>
            <person name="Apweiler R."/>
            <person name="Aturaliya R.N."/>
            <person name="Bailey T.L."/>
            <person name="Bansal M."/>
            <person name="Baxter L."/>
            <person name="Beisel K.W."/>
            <person name="Bersano T."/>
            <person name="Bono H."/>
            <person name="Chalk A.M."/>
            <person name="Chiu K.P."/>
            <person name="Choudhary V."/>
            <person name="Christoffels A."/>
            <person name="Clutterbuck D.R."/>
            <person name="Crowe M.L."/>
            <person name="Dalla E."/>
            <person name="Dalrymple B.P."/>
            <person name="de Bono B."/>
            <person name="Della Gatta G."/>
            <person name="di Bernardo D."/>
            <person name="Down T."/>
            <person name="Engstrom P."/>
            <person name="Fagiolini M."/>
            <person name="Faulkner G."/>
            <person name="Fletcher C.F."/>
            <person name="Fukushima T."/>
            <person name="Furuno M."/>
            <person name="Futaki S."/>
            <person name="Gariboldi M."/>
            <person name="Georgii-Hemming P."/>
            <person name="Gingeras T.R."/>
            <person name="Gojobori T."/>
            <person name="Green R.E."/>
            <person name="Gustincich S."/>
            <person name="Harbers M."/>
            <person name="Hayashi Y."/>
            <person name="Hensch T.K."/>
            <person name="Hirokawa N."/>
            <person name="Hill D."/>
            <person name="Huminiecki L."/>
            <person name="Iacono M."/>
            <person name="Ikeo K."/>
            <person name="Iwama A."/>
            <person name="Ishikawa T."/>
            <person name="Jakt M."/>
            <person name="Kanapin A."/>
            <person name="Katoh M."/>
            <person name="Kawasawa Y."/>
            <person name="Kelso J."/>
            <person name="Kitamura H."/>
            <person name="Kitano H."/>
            <person name="Kollias G."/>
            <person name="Krishnan S.P."/>
            <person name="Kruger A."/>
            <person name="Kummerfeld S.K."/>
            <person name="Kurochkin I.V."/>
            <person name="Lareau L.F."/>
            <person name="Lazarevic D."/>
            <person name="Lipovich L."/>
            <person name="Liu J."/>
            <person name="Liuni S."/>
            <person name="McWilliam S."/>
            <person name="Madan Babu M."/>
            <person name="Madera M."/>
            <person name="Marchionni L."/>
            <person name="Matsuda H."/>
            <person name="Matsuzawa S."/>
            <person name="Miki H."/>
            <person name="Mignone F."/>
            <person name="Miyake S."/>
            <person name="Morris K."/>
            <person name="Mottagui-Tabar S."/>
            <person name="Mulder N."/>
            <person name="Nakano N."/>
            <person name="Nakauchi H."/>
            <person name="Ng P."/>
            <person name="Nilsson R."/>
            <person name="Nishiguchi S."/>
            <person name="Nishikawa S."/>
            <person name="Nori F."/>
            <person name="Ohara O."/>
            <person name="Okazaki Y."/>
            <person name="Orlando V."/>
            <person name="Pang K.C."/>
            <person name="Pavan W.J."/>
            <person name="Pavesi G."/>
            <person name="Pesole G."/>
            <person name="Petrovsky N."/>
            <person name="Piazza S."/>
            <person name="Reed J."/>
            <person name="Reid J.F."/>
            <person name="Ring B.Z."/>
            <person name="Ringwald M."/>
            <person name="Rost B."/>
            <person name="Ruan Y."/>
            <person name="Salzberg S.L."/>
            <person name="Sandelin A."/>
            <person name="Schneider C."/>
            <person name="Schoenbach C."/>
            <person name="Sekiguchi K."/>
            <person name="Semple C.A."/>
            <person name="Seno S."/>
            <person name="Sessa L."/>
            <person name="Sheng Y."/>
            <person name="Shibata Y."/>
            <person name="Shimada H."/>
            <person name="Shimada K."/>
            <person name="Silva D."/>
            <person name="Sinclair B."/>
            <person name="Sperling S."/>
            <person name="Stupka E."/>
            <person name="Sugiura K."/>
            <person name="Sultana R."/>
            <person name="Takenaka Y."/>
            <person name="Taki K."/>
            <person name="Tammoja K."/>
            <person name="Tan S.L."/>
            <person name="Tang S."/>
            <person name="Taylor M.S."/>
            <person name="Tegner J."/>
            <person name="Teichmann S.A."/>
            <person name="Ueda H.R."/>
            <person name="van Nimwegen E."/>
            <person name="Verardo R."/>
            <person name="Wei C.L."/>
            <person name="Yagi K."/>
            <person name="Yamanishi H."/>
            <person name="Zabarovsky E."/>
            <person name="Zhu S."/>
            <person name="Zimmer A."/>
            <person name="Hide W."/>
            <person name="Bult C."/>
            <person name="Grimmond S.M."/>
            <person name="Teasdale R.D."/>
            <person name="Liu E.T."/>
            <person name="Brusic V."/>
            <person name="Quackenbush J."/>
            <person name="Wahlestedt C."/>
            <person name="Mattick J.S."/>
            <person name="Hume D.A."/>
            <person name="Kai C."/>
            <person name="Sasaki D."/>
            <person name="Tomaru Y."/>
            <person name="Fukuda S."/>
            <person name="Kanamori-Katayama M."/>
            <person name="Suzuki M."/>
            <person name="Aoki J."/>
            <person name="Arakawa T."/>
            <person name="Iida J."/>
            <person name="Imamura K."/>
            <person name="Itoh M."/>
            <person name="Kato T."/>
            <person name="Kawaji H."/>
            <person name="Kawagashira N."/>
            <person name="Kawashima T."/>
            <person name="Kojima M."/>
            <person name="Kondo S."/>
            <person name="Konno H."/>
            <person name="Nakano K."/>
            <person name="Ninomiya N."/>
            <person name="Nishio T."/>
            <person name="Okada M."/>
            <person name="Plessy C."/>
            <person name="Shibata K."/>
            <person name="Shiraki T."/>
            <person name="Suzuki S."/>
            <person name="Tagami M."/>
            <person name="Waki K."/>
            <person name="Watahiki A."/>
            <person name="Okamura-Oho Y."/>
            <person name="Suzuki H."/>
            <person name="Kawai J."/>
            <person name="Hayashizaki Y."/>
        </authorList>
    </citation>
    <scope>NUCLEOTIDE SEQUENCE [LARGE SCALE MRNA]</scope>
    <source>
        <strain>C57BL/6J</strain>
        <tissue>Embryo</tissue>
        <tissue>Heart</tissue>
        <tissue>Thymus</tissue>
    </source>
</reference>
<reference key="3">
    <citation type="journal article" date="2004" name="Genome Res.">
        <title>The status, quality, and expansion of the NIH full-length cDNA project: the Mammalian Gene Collection (MGC).</title>
        <authorList>
            <consortium name="The MGC Project Team"/>
        </authorList>
    </citation>
    <scope>NUCLEOTIDE SEQUENCE [LARGE SCALE MRNA]</scope>
</reference>
<reference key="4">
    <citation type="journal article" date="2007" name="Proc. Natl. Acad. Sci. U.S.A.">
        <title>Large-scale phosphorylation analysis of mouse liver.</title>
        <authorList>
            <person name="Villen J."/>
            <person name="Beausoleil S.A."/>
            <person name="Gerber S.A."/>
            <person name="Gygi S.P."/>
        </authorList>
    </citation>
    <scope>ACETYLATION [LARGE SCALE ANALYSIS] AT ALA-2</scope>
    <scope>CLEAVAGE OF INITIATOR METHIONINE [LARGE SCALE ANALYSIS]</scope>
    <scope>IDENTIFICATION BY MASS SPECTROMETRY [LARGE SCALE ANALYSIS]</scope>
    <source>
        <tissue>Liver</tissue>
    </source>
</reference>
<reference key="5">
    <citation type="journal article" date="2010" name="J. Biol. Chem.">
        <title>Central region of talin has a unique fold that binds vinculin and actin.</title>
        <authorList>
            <person name="Gingras A.R."/>
            <person name="Bate N."/>
            <person name="Goult B.T."/>
            <person name="Patel B."/>
            <person name="Kopp P.M."/>
            <person name="Emsley J."/>
            <person name="Barsukov I.L."/>
            <person name="Roberts G.C."/>
            <person name="Critchley D.R."/>
        </authorList>
    </citation>
    <scope>INTERACTION WITH F-ACTIN</scope>
    <scope>SUBUNIT</scope>
</reference>
<gene>
    <name evidence="1" type="primary">Tlnrd1</name>
    <name evidence="6" type="synonym">Mesdc1</name>
</gene>
<comment type="function">
    <text evidence="1">Actin-binding protein which may have an oncogenic function and regulates cell proliferation, migration and invasion in cancer cells.</text>
</comment>
<comment type="subunit">
    <text evidence="4">May homodimerize. Interacts with F-actin.</text>
</comment>
<comment type="tissue specificity">
    <text evidence="3">Ubiquitous.</text>
</comment>
<sequence>MASGSAGKPTGEAASPAPGSAVGGASSQPRKRLVSICDHCKGKMQLVADLLLLSSEARPVLFEGPASPGAGAESFEQCRDTIIARTKGLSILTHDVQSQLNMGRFGEAGDSLVELGDLVVSLTECSAHAAYLAAVATPGAQPAQPGLVDRYRVTRCRHEVEQGCAVLRATPLADMTPQLLLEVSQGLSRNLKFLTDACALASDKSRDRFSREQFKLGVKCMSTSASALLACVREVKAAPSELARSRCALFSGPLVQAVSALVGFATEPQFLGRAAAVSTEGKAVQTAILGGAMSVVSACVLLTQCLRDLAQHPDGSAKMSDHRERLRNSACAVSEGCTLLSQALRERSSPRTLPPVNSNSVN</sequence>
<dbReference type="EMBL" id="AF311213">
    <property type="protein sequence ID" value="AAG33620.1"/>
    <property type="molecule type" value="Genomic_DNA"/>
</dbReference>
<dbReference type="EMBL" id="AK084510">
    <property type="protein sequence ID" value="BAC39204.1"/>
    <property type="molecule type" value="mRNA"/>
</dbReference>
<dbReference type="EMBL" id="AK089082">
    <property type="protein sequence ID" value="BAC40740.1"/>
    <property type="molecule type" value="mRNA"/>
</dbReference>
<dbReference type="EMBL" id="AK162446">
    <property type="protein sequence ID" value="BAE36922.1"/>
    <property type="molecule type" value="mRNA"/>
</dbReference>
<dbReference type="EMBL" id="BC018326">
    <property type="protein sequence ID" value="AAH18326.1"/>
    <property type="molecule type" value="mRNA"/>
</dbReference>
<dbReference type="CCDS" id="CCDS21414.1"/>
<dbReference type="RefSeq" id="NP_109630.1">
    <property type="nucleotide sequence ID" value="NM_030705.4"/>
</dbReference>
<dbReference type="SMR" id="Q9ERE8"/>
<dbReference type="FunCoup" id="Q9ERE8">
    <property type="interactions" value="68"/>
</dbReference>
<dbReference type="STRING" id="10090.ENSMUSP00000091769"/>
<dbReference type="GlyGen" id="Q9ERE8">
    <property type="glycosylation" value="1 site"/>
</dbReference>
<dbReference type="iPTMnet" id="Q9ERE8"/>
<dbReference type="PhosphoSitePlus" id="Q9ERE8"/>
<dbReference type="jPOST" id="Q9ERE8"/>
<dbReference type="PaxDb" id="10090-ENSMUSP00000091769"/>
<dbReference type="ProteomicsDB" id="260668"/>
<dbReference type="Antibodypedia" id="63061">
    <property type="antibodies" value="20 antibodies from 9 providers"/>
</dbReference>
<dbReference type="Ensembl" id="ENSMUST00000094216.5">
    <property type="protein sequence ID" value="ENSMUSP00000091769.4"/>
    <property type="gene ID" value="ENSMUSG00000070462.5"/>
</dbReference>
<dbReference type="GeneID" id="80889"/>
<dbReference type="KEGG" id="mmu:80889"/>
<dbReference type="UCSC" id="uc009idw.1">
    <property type="organism name" value="mouse"/>
</dbReference>
<dbReference type="AGR" id="MGI:1891420"/>
<dbReference type="CTD" id="59274"/>
<dbReference type="MGI" id="MGI:1891420">
    <property type="gene designation" value="Tlnrd1"/>
</dbReference>
<dbReference type="VEuPathDB" id="HostDB:ENSMUSG00000070462"/>
<dbReference type="eggNOG" id="KOG4261">
    <property type="taxonomic scope" value="Eukaryota"/>
</dbReference>
<dbReference type="GeneTree" id="ENSGT00910000144335"/>
<dbReference type="HOGENOM" id="CLU_764970_0_0_1"/>
<dbReference type="InParanoid" id="Q9ERE8"/>
<dbReference type="OMA" id="DHCKVKM"/>
<dbReference type="OrthoDB" id="10009851at2759"/>
<dbReference type="PhylomeDB" id="Q9ERE8"/>
<dbReference type="BioGRID-ORCS" id="80889">
    <property type="hits" value="6 hits in 76 CRISPR screens"/>
</dbReference>
<dbReference type="PRO" id="PR:Q9ERE8"/>
<dbReference type="Proteomes" id="UP000000589">
    <property type="component" value="Chromosome 7"/>
</dbReference>
<dbReference type="RNAct" id="Q9ERE8">
    <property type="molecule type" value="protein"/>
</dbReference>
<dbReference type="Bgee" id="ENSMUSG00000070462">
    <property type="expression patterns" value="Expressed in embryonic brain and 195 other cell types or tissues"/>
</dbReference>
<dbReference type="GO" id="GO:0003779">
    <property type="term" value="F:actin binding"/>
    <property type="evidence" value="ECO:0000314"/>
    <property type="project" value="HGNC"/>
</dbReference>
<dbReference type="GO" id="GO:0042802">
    <property type="term" value="F:identical protein binding"/>
    <property type="evidence" value="ECO:0007669"/>
    <property type="project" value="Ensembl"/>
</dbReference>
<dbReference type="FunFam" id="1.20.120.230:FF:000018">
    <property type="entry name" value="Mesoderm development candidate 1"/>
    <property type="match status" value="1"/>
</dbReference>
<dbReference type="Gene3D" id="1.20.120.230">
    <property type="entry name" value="Alpha-catenin/vinculin-like"/>
    <property type="match status" value="1"/>
</dbReference>
<dbReference type="Gene3D" id="1.20.1420.10">
    <property type="entry name" value="Talin, central domain"/>
    <property type="match status" value="1"/>
</dbReference>
<dbReference type="InterPro" id="IPR054082">
    <property type="entry name" value="Talin_IBS2B"/>
</dbReference>
<dbReference type="InterPro" id="IPR042799">
    <property type="entry name" value="TLNRD1"/>
</dbReference>
<dbReference type="PANTHER" id="PTHR47133">
    <property type="entry name" value="TALIN ROD DOMAIN-CONTAINING PROTEIN 1"/>
    <property type="match status" value="1"/>
</dbReference>
<dbReference type="PANTHER" id="PTHR47133:SF1">
    <property type="entry name" value="TALIN ROD DOMAIN-CONTAINING PROTEIN 1"/>
    <property type="match status" value="1"/>
</dbReference>
<dbReference type="Pfam" id="PF21896">
    <property type="entry name" value="Talin_IBS2B"/>
    <property type="match status" value="1"/>
</dbReference>